<organism>
    <name type="scientific">Saccharomyces cerevisiae (strain ATCC 204508 / S288c)</name>
    <name type="common">Baker's yeast</name>
    <dbReference type="NCBI Taxonomy" id="559292"/>
    <lineage>
        <taxon>Eukaryota</taxon>
        <taxon>Fungi</taxon>
        <taxon>Dikarya</taxon>
        <taxon>Ascomycota</taxon>
        <taxon>Saccharomycotina</taxon>
        <taxon>Saccharomycetes</taxon>
        <taxon>Saccharomycetales</taxon>
        <taxon>Saccharomycetaceae</taxon>
        <taxon>Saccharomyces</taxon>
    </lineage>
</organism>
<gene>
    <name type="primary">ERV41</name>
    <name type="ordered locus">YML067C</name>
</gene>
<proteinExistence type="evidence at protein level"/>
<comment type="function">
    <text evidence="3 5">Constituent of COPII-coated endoplasmic reticulum-derived transport vesicles. Required for efficient transport of a subset of secretory proteins to the Golgi (PubMed:11157978, PubMed:12426381). The C-terminal Ile-Leu motif is required for exit from the endoplasmic reticulum (PubMed:12426381). Facilitates retrograde transport from the Golgi to the endoplasmic reticulum (PubMed:12426381).</text>
</comment>
<comment type="subunit">
    <text evidence="3 4">Interacts with ERV46.</text>
</comment>
<comment type="interaction">
    <interactant intactId="EBI-27850">
        <id>Q04651</id>
    </interactant>
    <interactant intactId="EBI-23662">
        <id>P53337</id>
        <label>ERV29</label>
    </interactant>
    <organismsDiffer>false</organismsDiffer>
    <experiments>3</experiments>
</comment>
<comment type="interaction">
    <interactant intactId="EBI-27850">
        <id>Q04651</id>
    </interactant>
    <interactant intactId="EBI-27850">
        <id>Q04651</id>
        <label>ERV41</label>
    </interactant>
    <organismsDiffer>false</organismsDiffer>
    <experiments>3</experiments>
</comment>
<comment type="interaction">
    <interactant intactId="EBI-27850">
        <id>Q04651</id>
    </interactant>
    <interactant intactId="EBI-20659">
        <id>P39727</id>
        <label>ERV46</label>
    </interactant>
    <organismsDiffer>false</organismsDiffer>
    <experiments>6</experiments>
</comment>
<comment type="interaction">
    <interactant intactId="EBI-27850">
        <id>Q04651</id>
    </interactant>
    <interactant intactId="EBI-4869">
        <id>P41810</id>
        <label>SEC26</label>
    </interactant>
    <organismsDiffer>false</organismsDiffer>
    <experiments>4</experiments>
</comment>
<comment type="subcellular location">
    <subcellularLocation>
        <location evidence="4 5">Endoplasmic reticulum membrane</location>
        <topology evidence="1">Multi-pass membrane protein</topology>
    </subcellularLocation>
    <subcellularLocation>
        <location evidence="2 4 5 7">Golgi apparatus membrane</location>
        <topology>Multi-pass membrane protein</topology>
    </subcellularLocation>
    <subcellularLocation>
        <location evidence="3 5">Cytoplasmic vesicle</location>
        <location evidence="3 5">COPII-coated vesicle membrane</location>
        <topology evidence="1">Multi-pass membrane protein</topology>
    </subcellularLocation>
    <text evidence="5">Recycles between endoplasmic reticulum and Golgi. Resides in the endoplasmic and Golgi compartments, and then packaged into endoplasmic reticulum derived vesicles.</text>
</comment>
<comment type="miscellaneous">
    <text evidence="6">Present with 3000 molecules/cell in log phase SD medium.</text>
</comment>
<comment type="similarity">
    <text evidence="8">Belongs to the ERGIC family.</text>
</comment>
<comment type="sequence caution" evidence="8">
    <conflict type="erroneous gene model prediction">
        <sequence resource="EMBL-CDS" id="CAA86253"/>
    </conflict>
</comment>
<name>ERV41_YEAST</name>
<evidence type="ECO:0000255" key="1"/>
<evidence type="ECO:0000269" key="2">
    <source>
    </source>
</evidence>
<evidence type="ECO:0000269" key="3">
    <source>
    </source>
</evidence>
<evidence type="ECO:0000269" key="4">
    <source>
    </source>
</evidence>
<evidence type="ECO:0000269" key="5">
    <source>
    </source>
</evidence>
<evidence type="ECO:0000269" key="6">
    <source>
    </source>
</evidence>
<evidence type="ECO:0000269" key="7">
    <source>
    </source>
</evidence>
<evidence type="ECO:0000305" key="8"/>
<evidence type="ECO:0007744" key="9">
    <source>
        <dbReference type="PDB" id="3ZLC"/>
    </source>
</evidence>
<evidence type="ECO:0007829" key="10">
    <source>
        <dbReference type="PDB" id="3ZLC"/>
    </source>
</evidence>
<reference key="1">
    <citation type="journal article" date="1997" name="Nature">
        <title>The nucleotide sequence of Saccharomyces cerevisiae chromosome XIII.</title>
        <authorList>
            <person name="Bowman S."/>
            <person name="Churcher C.M."/>
            <person name="Badcock K."/>
            <person name="Brown D."/>
            <person name="Chillingworth T."/>
            <person name="Connor R."/>
            <person name="Dedman K."/>
            <person name="Devlin K."/>
            <person name="Gentles S."/>
            <person name="Hamlin N."/>
            <person name="Hunt S."/>
            <person name="Jagels K."/>
            <person name="Lye G."/>
            <person name="Moule S."/>
            <person name="Odell C."/>
            <person name="Pearson D."/>
            <person name="Rajandream M.A."/>
            <person name="Rice P."/>
            <person name="Skelton J."/>
            <person name="Walsh S.V."/>
            <person name="Whitehead S."/>
            <person name="Barrell B.G."/>
        </authorList>
    </citation>
    <scope>NUCLEOTIDE SEQUENCE [LARGE SCALE GENOMIC DNA]</scope>
    <source>
        <strain>ATCC 204508 / S288c</strain>
    </source>
</reference>
<reference key="2">
    <citation type="journal article" date="2014" name="G3 (Bethesda)">
        <title>The reference genome sequence of Saccharomyces cerevisiae: Then and now.</title>
        <authorList>
            <person name="Engel S.R."/>
            <person name="Dietrich F.S."/>
            <person name="Fisk D.G."/>
            <person name="Binkley G."/>
            <person name="Balakrishnan R."/>
            <person name="Costanzo M.C."/>
            <person name="Dwight S.S."/>
            <person name="Hitz B.C."/>
            <person name="Karra K."/>
            <person name="Nash R.S."/>
            <person name="Weng S."/>
            <person name="Wong E.D."/>
            <person name="Lloyd P."/>
            <person name="Skrzypek M.S."/>
            <person name="Miyasato S.R."/>
            <person name="Simison M."/>
            <person name="Cherry J.M."/>
        </authorList>
    </citation>
    <scope>GENOME REANNOTATION</scope>
    <source>
        <strain>ATCC 204508 / S288c</strain>
    </source>
</reference>
<reference key="3">
    <citation type="journal article" date="2000" name="FEBS Lett.">
        <title>Proteins in the early Golgi compartment of Saccharomyces cerevisiae immunoisolated by Sed5p.</title>
        <authorList>
            <person name="Cho J.-H."/>
            <person name="Noda Y."/>
            <person name="Yoda K."/>
        </authorList>
    </citation>
    <scope>PROTEIN SEQUENCE OF 4-10</scope>
    <scope>SUBCELLULAR LOCATION</scope>
</reference>
<reference key="4">
    <citation type="journal article" date="2001" name="Biosci. Biotechnol. Biochem.">
        <title>A novel membrane protein complex on the endoplasmic reticulum and early Golgi compartments in the yeast Saccharomyces cerevisiae.</title>
        <authorList>
            <person name="Cho J.-H."/>
            <person name="Noda Y."/>
            <person name="Adachi H."/>
            <person name="Yoda K."/>
        </authorList>
    </citation>
    <scope>INTERACTION WITH ERV46</scope>
    <scope>SUBCELLULAR LOCATION</scope>
</reference>
<reference key="5">
    <citation type="journal article" date="2001" name="J. Cell Biol.">
        <title>Erv41p and Erv46p: new components of COPII vesicles involved in transport between the ER and Golgi complex.</title>
        <authorList>
            <person name="Otte S."/>
            <person name="Belden W.J."/>
            <person name="Heidtman M."/>
            <person name="Liu J."/>
            <person name="Jensen O.N."/>
            <person name="Barlowe C."/>
        </authorList>
    </citation>
    <scope>FUNCTION</scope>
    <scope>INTERACTION WITH ERV46</scope>
    <scope>SUBCELLULAR LOCATION</scope>
</reference>
<reference key="6">
    <citation type="journal article" date="2002" name="EMBO J.">
        <title>The Erv41p-Erv46p complex: multiple export signals are required in trans for COPII-dependent transport from the ER.</title>
        <authorList>
            <person name="Otte S."/>
            <person name="Barlowe C."/>
        </authorList>
    </citation>
    <scope>FUNCTION</scope>
    <scope>SUBCELLULAR LOCATION</scope>
</reference>
<reference key="7">
    <citation type="journal article" date="2003" name="Nature">
        <title>Global analysis of protein expression in yeast.</title>
        <authorList>
            <person name="Ghaemmaghami S."/>
            <person name="Huh W.-K."/>
            <person name="Bower K."/>
            <person name="Howson R.W."/>
            <person name="Belle A."/>
            <person name="Dephoure N."/>
            <person name="O'Shea E.K."/>
            <person name="Weissman J.S."/>
        </authorList>
    </citation>
    <scope>LEVEL OF PROTEIN EXPRESSION [LARGE SCALE ANALYSIS]</scope>
</reference>
<reference key="8">
    <citation type="journal article" date="2005" name="Mol. Cell. Biol.">
        <title>Immunoisolation of the yeast Golgi subcompartments and characterization of a novel membrane protein, Svp26, discovered in the Sed5-containing compartments.</title>
        <authorList>
            <person name="Inadome H."/>
            <person name="Noda Y."/>
            <person name="Adachi H."/>
            <person name="Yoda K."/>
        </authorList>
    </citation>
    <scope>SUBCELLULAR LOCATION</scope>
</reference>
<reference evidence="9" key="9">
    <citation type="journal article" date="2013" name="J. Mol. Biol.">
        <title>The crystal structure of the lumenal domain of Erv41p, a protein involved in transport between the endoplasmic reticulum and Golgi apparatus.</title>
        <authorList>
            <person name="Biterova E.I."/>
            <person name="Svard M."/>
            <person name="Possner D.D."/>
            <person name="Guy J.E."/>
        </authorList>
    </citation>
    <scope>X-RAY CRYSTALLOGRAPHY (2.00 ANGSTROMS) OF 49-297</scope>
</reference>
<feature type="chain" id="PRO_0000203251" description="ER-derived vesicles protein ERV41">
    <location>
        <begin position="1"/>
        <end position="352"/>
    </location>
</feature>
<feature type="topological domain" description="Cytoplasmic" evidence="1">
    <location>
        <begin position="1"/>
        <end position="23"/>
    </location>
</feature>
<feature type="transmembrane region" description="Helical" evidence="1">
    <location>
        <begin position="24"/>
        <end position="44"/>
    </location>
</feature>
<feature type="topological domain" description="Lumenal" evidence="1">
    <location>
        <begin position="45"/>
        <end position="311"/>
    </location>
</feature>
<feature type="transmembrane region" description="Helical" evidence="1">
    <location>
        <begin position="312"/>
        <end position="332"/>
    </location>
</feature>
<feature type="topological domain" description="Cytoplasmic" evidence="1">
    <location>
        <begin position="333"/>
        <end position="352"/>
    </location>
</feature>
<feature type="short sequence motif" description="Isoleucine-leucine motif">
    <location>
        <begin position="349"/>
        <end position="350"/>
    </location>
</feature>
<feature type="strand" evidence="10">
    <location>
        <begin position="52"/>
        <end position="57"/>
    </location>
</feature>
<feature type="strand" evidence="10">
    <location>
        <begin position="63"/>
        <end position="75"/>
    </location>
</feature>
<feature type="helix" evidence="10">
    <location>
        <begin position="77"/>
        <end position="79"/>
    </location>
</feature>
<feature type="strand" evidence="10">
    <location>
        <begin position="80"/>
        <end position="88"/>
    </location>
</feature>
<feature type="strand" evidence="10">
    <location>
        <begin position="98"/>
        <end position="102"/>
    </location>
</feature>
<feature type="helix" evidence="10">
    <location>
        <begin position="134"/>
        <end position="136"/>
    </location>
</feature>
<feature type="helix" evidence="10">
    <location>
        <begin position="157"/>
        <end position="159"/>
    </location>
</feature>
<feature type="strand" evidence="10">
    <location>
        <begin position="162"/>
        <end position="181"/>
    </location>
</feature>
<feature type="strand" evidence="10">
    <location>
        <begin position="184"/>
        <end position="187"/>
    </location>
</feature>
<feature type="helix" evidence="10">
    <location>
        <begin position="194"/>
        <end position="196"/>
    </location>
</feature>
<feature type="strand" evidence="10">
    <location>
        <begin position="201"/>
        <end position="210"/>
    </location>
</feature>
<feature type="turn" evidence="10">
    <location>
        <begin position="218"/>
        <end position="221"/>
    </location>
</feature>
<feature type="strand" evidence="10">
    <location>
        <begin position="222"/>
        <end position="224"/>
    </location>
</feature>
<feature type="strand" evidence="10">
    <location>
        <begin position="233"/>
        <end position="245"/>
    </location>
</feature>
<feature type="turn" evidence="10">
    <location>
        <begin position="246"/>
        <end position="248"/>
    </location>
</feature>
<feature type="strand" evidence="10">
    <location>
        <begin position="250"/>
        <end position="252"/>
    </location>
</feature>
<feature type="strand" evidence="10">
    <location>
        <begin position="254"/>
        <end position="264"/>
    </location>
</feature>
<feature type="helix" evidence="10">
    <location>
        <begin position="266"/>
        <end position="269"/>
    </location>
</feature>
<feature type="strand" evidence="10">
    <location>
        <begin position="278"/>
        <end position="285"/>
    </location>
</feature>
<feature type="strand" evidence="10">
    <location>
        <begin position="287"/>
        <end position="293"/>
    </location>
</feature>
<protein>
    <recommendedName>
        <fullName>ER-derived vesicles protein ERV41</fullName>
    </recommendedName>
</protein>
<accession>Q04651</accession>
<accession>D6VZA6</accession>
<accession>E9PAD9</accession>
<dbReference type="EMBL" id="Z38114">
    <property type="protein sequence ID" value="CAA86253.1"/>
    <property type="status" value="ALT_SEQ"/>
    <property type="molecule type" value="Genomic_DNA"/>
</dbReference>
<dbReference type="EMBL" id="Z38114">
    <property type="protein sequence ID" value="CAA86254.1"/>
    <property type="molecule type" value="Genomic_DNA"/>
</dbReference>
<dbReference type="EMBL" id="BK006946">
    <property type="protein sequence ID" value="DAA09830.1"/>
    <property type="molecule type" value="Genomic_DNA"/>
</dbReference>
<dbReference type="PIR" id="S48331">
    <property type="entry name" value="S48331"/>
</dbReference>
<dbReference type="RefSeq" id="NP_013644.1">
    <property type="nucleotide sequence ID" value="NM_001182426.1"/>
</dbReference>
<dbReference type="PDB" id="3ZLC">
    <property type="method" value="X-ray"/>
    <property type="resolution" value="2.00 A"/>
    <property type="chains" value="A/B=49-297"/>
</dbReference>
<dbReference type="PDBsum" id="3ZLC"/>
<dbReference type="SMR" id="Q04651"/>
<dbReference type="BioGRID" id="35099">
    <property type="interactions" value="190"/>
</dbReference>
<dbReference type="ComplexPortal" id="CPX-1045">
    <property type="entry name" value="ERV41-ERV46 retrograde receptor complex"/>
</dbReference>
<dbReference type="DIP" id="DIP-6791N"/>
<dbReference type="FunCoup" id="Q04651">
    <property type="interactions" value="448"/>
</dbReference>
<dbReference type="IntAct" id="Q04651">
    <property type="interactions" value="50"/>
</dbReference>
<dbReference type="MINT" id="Q04651"/>
<dbReference type="STRING" id="4932.YML067C"/>
<dbReference type="iPTMnet" id="Q04651"/>
<dbReference type="PaxDb" id="4932-YML067C"/>
<dbReference type="PeptideAtlas" id="Q04651"/>
<dbReference type="EnsemblFungi" id="YML067C_mRNA">
    <property type="protein sequence ID" value="YML067C"/>
    <property type="gene ID" value="YML067C"/>
</dbReference>
<dbReference type="GeneID" id="854935"/>
<dbReference type="KEGG" id="sce:YML067C"/>
<dbReference type="AGR" id="SGD:S000004532"/>
<dbReference type="SGD" id="S000004532">
    <property type="gene designation" value="ERV41"/>
</dbReference>
<dbReference type="VEuPathDB" id="FungiDB:YML067C"/>
<dbReference type="eggNOG" id="KOG2667">
    <property type="taxonomic scope" value="Eukaryota"/>
</dbReference>
<dbReference type="GeneTree" id="ENSGT00530000063113"/>
<dbReference type="HOGENOM" id="CLU_034705_2_1_1"/>
<dbReference type="InParanoid" id="Q04651"/>
<dbReference type="OMA" id="MTNHYLR"/>
<dbReference type="OrthoDB" id="5541786at2759"/>
<dbReference type="BioCyc" id="YEAST:G3O-32662-MONOMER"/>
<dbReference type="BioGRID-ORCS" id="854935">
    <property type="hits" value="4 hits in 10 CRISPR screens"/>
</dbReference>
<dbReference type="EvolutionaryTrace" id="Q04651"/>
<dbReference type="PRO" id="PR:Q04651"/>
<dbReference type="Proteomes" id="UP000002311">
    <property type="component" value="Chromosome XIII"/>
</dbReference>
<dbReference type="RNAct" id="Q04651">
    <property type="molecule type" value="protein"/>
</dbReference>
<dbReference type="GO" id="GO:0030134">
    <property type="term" value="C:COPII-coated ER to Golgi transport vesicle"/>
    <property type="evidence" value="ECO:0000314"/>
    <property type="project" value="SGD"/>
</dbReference>
<dbReference type="GO" id="GO:0005783">
    <property type="term" value="C:endoplasmic reticulum"/>
    <property type="evidence" value="ECO:0000318"/>
    <property type="project" value="GO_Central"/>
</dbReference>
<dbReference type="GO" id="GO:0005789">
    <property type="term" value="C:endoplasmic reticulum membrane"/>
    <property type="evidence" value="ECO:0000314"/>
    <property type="project" value="SGD"/>
</dbReference>
<dbReference type="GO" id="GO:0012507">
    <property type="term" value="C:ER to Golgi transport vesicle membrane"/>
    <property type="evidence" value="ECO:0007669"/>
    <property type="project" value="UniProtKB-SubCell"/>
</dbReference>
<dbReference type="GO" id="GO:0000139">
    <property type="term" value="C:Golgi membrane"/>
    <property type="evidence" value="ECO:0000314"/>
    <property type="project" value="SGD"/>
</dbReference>
<dbReference type="GO" id="GO:0061852">
    <property type="term" value="C:retrograde transporter complex, Golgi to ER"/>
    <property type="evidence" value="ECO:0000353"/>
    <property type="project" value="ComplexPortal"/>
</dbReference>
<dbReference type="GO" id="GO:0042802">
    <property type="term" value="F:identical protein binding"/>
    <property type="evidence" value="ECO:0000353"/>
    <property type="project" value="IntAct"/>
</dbReference>
<dbReference type="GO" id="GO:0006888">
    <property type="term" value="P:endoplasmic reticulum to Golgi vesicle-mediated transport"/>
    <property type="evidence" value="ECO:0000316"/>
    <property type="project" value="SGD"/>
</dbReference>
<dbReference type="GO" id="GO:0015031">
    <property type="term" value="P:protein transport"/>
    <property type="evidence" value="ECO:0007669"/>
    <property type="project" value="UniProtKB-KW"/>
</dbReference>
<dbReference type="GO" id="GO:0006890">
    <property type="term" value="P:retrograde vesicle-mediated transport, Golgi to endoplasmic reticulum"/>
    <property type="evidence" value="ECO:0000315"/>
    <property type="project" value="ComplexPortal"/>
</dbReference>
<dbReference type="InterPro" id="IPR045888">
    <property type="entry name" value="Erv"/>
</dbReference>
<dbReference type="InterPro" id="IPR012936">
    <property type="entry name" value="Erv_C"/>
</dbReference>
<dbReference type="InterPro" id="IPR039542">
    <property type="entry name" value="Erv_N"/>
</dbReference>
<dbReference type="PANTHER" id="PTHR10984">
    <property type="entry name" value="ENDOPLASMIC RETICULUM-GOLGI INTERMEDIATE COMPARTMENT PROTEIN"/>
    <property type="match status" value="1"/>
</dbReference>
<dbReference type="PANTHER" id="PTHR10984:SF81">
    <property type="entry name" value="ER-DERIVED VESICLES PROTEIN ERV41"/>
    <property type="match status" value="1"/>
</dbReference>
<dbReference type="Pfam" id="PF07970">
    <property type="entry name" value="COPIIcoated_ERV"/>
    <property type="match status" value="1"/>
</dbReference>
<dbReference type="Pfam" id="PF13850">
    <property type="entry name" value="ERGIC_N"/>
    <property type="match status" value="1"/>
</dbReference>
<sequence>MAGLKTFDAFPKTEEQYKKKSTKGGLTSLLTYLFLLFIAWTEFGEYFGGYIDQQYVVDSQVRDTVQINMDIYVNTKCDWLQINVRDQTMDRKLVLEELQLEEMPFFIPYDTKVNDINEIITPELDEILGEAIPAEFREKLDTRSFFDESDPNKAHLPEFNGCHVFGSIPVNRVSGELQITAKSLGYVASRKAPLEELKFNHVINEFSFGDFYPYIDNPLDNTAQFNQDEPLTTYVYYTSVVPTLFKKLGAEVDTNQYSVNDYRYLYKDVAAKGDKMPGIFFKYNFEPLSIVVSDVRLSFIQFLVRLVAICSFLVYCASWIFTLLDMALITIMGPKWSLRYQPDDKTKGILDR</sequence>
<keyword id="KW-0002">3D-structure</keyword>
<keyword id="KW-0968">Cytoplasmic vesicle</keyword>
<keyword id="KW-0903">Direct protein sequencing</keyword>
<keyword id="KW-0256">Endoplasmic reticulum</keyword>
<keyword id="KW-0931">ER-Golgi transport</keyword>
<keyword id="KW-0333">Golgi apparatus</keyword>
<keyword id="KW-0472">Membrane</keyword>
<keyword id="KW-0653">Protein transport</keyword>
<keyword id="KW-1185">Reference proteome</keyword>
<keyword id="KW-0812">Transmembrane</keyword>
<keyword id="KW-1133">Transmembrane helix</keyword>
<keyword id="KW-0813">Transport</keyword>